<protein>
    <recommendedName>
        <fullName evidence="1">Transcription termination/antitermination protein NusA</fullName>
    </recommendedName>
</protein>
<reference key="1">
    <citation type="journal article" date="2003" name="Proc. Natl. Acad. Sci. U.S.A.">
        <title>The complete genome sequence of Mycobacterium bovis.</title>
        <authorList>
            <person name="Garnier T."/>
            <person name="Eiglmeier K."/>
            <person name="Camus J.-C."/>
            <person name="Medina N."/>
            <person name="Mansoor H."/>
            <person name="Pryor M."/>
            <person name="Duthoy S."/>
            <person name="Grondin S."/>
            <person name="Lacroix C."/>
            <person name="Monsempe C."/>
            <person name="Simon S."/>
            <person name="Harris B."/>
            <person name="Atkin R."/>
            <person name="Doggett J."/>
            <person name="Mayes R."/>
            <person name="Keating L."/>
            <person name="Wheeler P.R."/>
            <person name="Parkhill J."/>
            <person name="Barrell B.G."/>
            <person name="Cole S.T."/>
            <person name="Gordon S.V."/>
            <person name="Hewinson R.G."/>
        </authorList>
    </citation>
    <scope>NUCLEOTIDE SEQUENCE [LARGE SCALE GENOMIC DNA]</scope>
    <source>
        <strain>ATCC BAA-935 / AF2122/97</strain>
    </source>
</reference>
<reference key="2">
    <citation type="journal article" date="2017" name="Genome Announc.">
        <title>Updated reference genome sequence and annotation of Mycobacterium bovis AF2122/97.</title>
        <authorList>
            <person name="Malone K.M."/>
            <person name="Farrell D."/>
            <person name="Stuber T.P."/>
            <person name="Schubert O.T."/>
            <person name="Aebersold R."/>
            <person name="Robbe-Austerman S."/>
            <person name="Gordon S.V."/>
        </authorList>
    </citation>
    <scope>NUCLEOTIDE SEQUENCE [LARGE SCALE GENOMIC DNA]</scope>
    <scope>GENOME REANNOTATION</scope>
    <source>
        <strain>ATCC BAA-935 / AF2122/97</strain>
    </source>
</reference>
<gene>
    <name evidence="1" type="primary">nusA</name>
    <name type="ordered locus">BQ2027_MB2866C</name>
</gene>
<name>NUSA_MYCBO</name>
<feature type="chain" id="PRO_0000181975" description="Transcription termination/antitermination protein NusA">
    <location>
        <begin position="1"/>
        <end position="347"/>
    </location>
</feature>
<feature type="domain" description="S1 motif" evidence="1">
    <location>
        <begin position="112"/>
        <end position="184"/>
    </location>
</feature>
<feature type="domain" description="KH" evidence="1">
    <location>
        <begin position="287"/>
        <end position="347"/>
    </location>
</feature>
<feature type="region of interest" description="Disordered" evidence="2">
    <location>
        <begin position="322"/>
        <end position="347"/>
    </location>
</feature>
<comment type="function">
    <text evidence="1">Participates in both transcription termination and antitermination.</text>
</comment>
<comment type="subunit">
    <text evidence="1">Monomer. Binds directly to the core enzyme of the DNA-dependent RNA polymerase and to nascent RNA.</text>
</comment>
<comment type="subcellular location">
    <subcellularLocation>
        <location evidence="1">Cytoplasm</location>
    </subcellularLocation>
</comment>
<comment type="similarity">
    <text evidence="1">Belongs to the NusA family.</text>
</comment>
<proteinExistence type="inferred from homology"/>
<dbReference type="EMBL" id="LT708304">
    <property type="protein sequence ID" value="SIU01486.1"/>
    <property type="molecule type" value="Genomic_DNA"/>
</dbReference>
<dbReference type="RefSeq" id="NP_856511.1">
    <property type="nucleotide sequence ID" value="NC_002945.3"/>
</dbReference>
<dbReference type="RefSeq" id="WP_003414511.1">
    <property type="nucleotide sequence ID" value="NC_002945.4"/>
</dbReference>
<dbReference type="SMR" id="P0A5M3"/>
<dbReference type="GeneID" id="45426828"/>
<dbReference type="KEGG" id="mbo:BQ2027_MB2866C"/>
<dbReference type="PATRIC" id="fig|233413.5.peg.3144"/>
<dbReference type="Proteomes" id="UP000001419">
    <property type="component" value="Chromosome"/>
</dbReference>
<dbReference type="GO" id="GO:0005829">
    <property type="term" value="C:cytosol"/>
    <property type="evidence" value="ECO:0007669"/>
    <property type="project" value="TreeGrafter"/>
</dbReference>
<dbReference type="GO" id="GO:0003700">
    <property type="term" value="F:DNA-binding transcription factor activity"/>
    <property type="evidence" value="ECO:0007669"/>
    <property type="project" value="InterPro"/>
</dbReference>
<dbReference type="GO" id="GO:0003723">
    <property type="term" value="F:RNA binding"/>
    <property type="evidence" value="ECO:0007669"/>
    <property type="project" value="UniProtKB-UniRule"/>
</dbReference>
<dbReference type="GO" id="GO:0006353">
    <property type="term" value="P:DNA-templated transcription termination"/>
    <property type="evidence" value="ECO:0007669"/>
    <property type="project" value="UniProtKB-UniRule"/>
</dbReference>
<dbReference type="GO" id="GO:0031564">
    <property type="term" value="P:transcription antitermination"/>
    <property type="evidence" value="ECO:0007669"/>
    <property type="project" value="UniProtKB-UniRule"/>
</dbReference>
<dbReference type="CDD" id="cd02134">
    <property type="entry name" value="KH-II_NusA_rpt1"/>
    <property type="match status" value="1"/>
</dbReference>
<dbReference type="CDD" id="cd22529">
    <property type="entry name" value="KH-II_NusA_rpt2"/>
    <property type="match status" value="1"/>
</dbReference>
<dbReference type="CDD" id="cd04455">
    <property type="entry name" value="S1_NusA"/>
    <property type="match status" value="1"/>
</dbReference>
<dbReference type="FunFam" id="2.40.50.140:FF:000098">
    <property type="entry name" value="Transcription termination/antitermination protein NusA"/>
    <property type="match status" value="1"/>
</dbReference>
<dbReference type="FunFam" id="3.30.1480.10:FF:000004">
    <property type="entry name" value="Transcription termination/antitermination protein NusA"/>
    <property type="match status" value="1"/>
</dbReference>
<dbReference type="FunFam" id="3.30.300.20:FF:000002">
    <property type="entry name" value="Transcription termination/antitermination protein NusA"/>
    <property type="match status" value="1"/>
</dbReference>
<dbReference type="FunFam" id="3.30.300.20:FF:000005">
    <property type="entry name" value="Transcription termination/antitermination protein NusA"/>
    <property type="match status" value="1"/>
</dbReference>
<dbReference type="Gene3D" id="3.30.300.20">
    <property type="match status" value="2"/>
</dbReference>
<dbReference type="Gene3D" id="2.40.50.140">
    <property type="entry name" value="Nucleic acid-binding proteins"/>
    <property type="match status" value="1"/>
</dbReference>
<dbReference type="Gene3D" id="3.30.1480.10">
    <property type="entry name" value="NusA, N-terminal domain"/>
    <property type="match status" value="1"/>
</dbReference>
<dbReference type="HAMAP" id="MF_00945_B">
    <property type="entry name" value="NusA_B"/>
    <property type="match status" value="1"/>
</dbReference>
<dbReference type="InterPro" id="IPR015946">
    <property type="entry name" value="KH_dom-like_a/b"/>
</dbReference>
<dbReference type="InterPro" id="IPR025249">
    <property type="entry name" value="KH_dom_NusA-like"/>
</dbReference>
<dbReference type="InterPro" id="IPR009019">
    <property type="entry name" value="KH_sf_prok-type"/>
</dbReference>
<dbReference type="InterPro" id="IPR012340">
    <property type="entry name" value="NA-bd_OB-fold"/>
</dbReference>
<dbReference type="InterPro" id="IPR030842">
    <property type="entry name" value="NusA_bac"/>
</dbReference>
<dbReference type="InterPro" id="IPR036555">
    <property type="entry name" value="NusA_N_sf"/>
</dbReference>
<dbReference type="InterPro" id="IPR003029">
    <property type="entry name" value="S1_domain"/>
</dbReference>
<dbReference type="InterPro" id="IPR013735">
    <property type="entry name" value="TF_NusA_N"/>
</dbReference>
<dbReference type="InterPro" id="IPR010213">
    <property type="entry name" value="Tscrpt_termination_fac_NusA"/>
</dbReference>
<dbReference type="NCBIfam" id="TIGR01953">
    <property type="entry name" value="NusA"/>
    <property type="match status" value="1"/>
</dbReference>
<dbReference type="PANTHER" id="PTHR22648">
    <property type="entry name" value="TRANSCRIPTION TERMINATION FACTOR NUSA"/>
    <property type="match status" value="1"/>
</dbReference>
<dbReference type="PANTHER" id="PTHR22648:SF0">
    <property type="entry name" value="TRANSCRIPTION TERMINATION_ANTITERMINATION PROTEIN NUSA"/>
    <property type="match status" value="1"/>
</dbReference>
<dbReference type="Pfam" id="PF13184">
    <property type="entry name" value="KH_5"/>
    <property type="match status" value="1"/>
</dbReference>
<dbReference type="Pfam" id="PF08529">
    <property type="entry name" value="NusA_N"/>
    <property type="match status" value="2"/>
</dbReference>
<dbReference type="SMART" id="SM00316">
    <property type="entry name" value="S1"/>
    <property type="match status" value="1"/>
</dbReference>
<dbReference type="SUPFAM" id="SSF50249">
    <property type="entry name" value="Nucleic acid-binding proteins"/>
    <property type="match status" value="1"/>
</dbReference>
<dbReference type="SUPFAM" id="SSF54814">
    <property type="entry name" value="Prokaryotic type KH domain (KH-domain type II)"/>
    <property type="match status" value="2"/>
</dbReference>
<dbReference type="SUPFAM" id="SSF69705">
    <property type="entry name" value="Transcription factor NusA, N-terminal domain"/>
    <property type="match status" value="1"/>
</dbReference>
<dbReference type="PROSITE" id="PS50084">
    <property type="entry name" value="KH_TYPE_1"/>
    <property type="match status" value="1"/>
</dbReference>
<dbReference type="PROSITE" id="PS50126">
    <property type="entry name" value="S1"/>
    <property type="match status" value="1"/>
</dbReference>
<organism>
    <name type="scientific">Mycobacterium bovis (strain ATCC BAA-935 / AF2122/97)</name>
    <dbReference type="NCBI Taxonomy" id="233413"/>
    <lineage>
        <taxon>Bacteria</taxon>
        <taxon>Bacillati</taxon>
        <taxon>Actinomycetota</taxon>
        <taxon>Actinomycetes</taxon>
        <taxon>Mycobacteriales</taxon>
        <taxon>Mycobacteriaceae</taxon>
        <taxon>Mycobacterium</taxon>
        <taxon>Mycobacterium tuberculosis complex</taxon>
    </lineage>
</organism>
<keyword id="KW-0963">Cytoplasm</keyword>
<keyword id="KW-1185">Reference proteome</keyword>
<keyword id="KW-0694">RNA-binding</keyword>
<keyword id="KW-0804">Transcription</keyword>
<keyword id="KW-0889">Transcription antitermination</keyword>
<keyword id="KW-0805">Transcription regulation</keyword>
<keyword id="KW-0806">Transcription termination</keyword>
<evidence type="ECO:0000255" key="1">
    <source>
        <dbReference type="HAMAP-Rule" id="MF_00945"/>
    </source>
</evidence>
<evidence type="ECO:0000256" key="2">
    <source>
        <dbReference type="SAM" id="MobiDB-lite"/>
    </source>
</evidence>
<accession>P0A5M3</accession>
<accession>A0A1R3Y359</accession>
<accession>O05818</accession>
<accession>X2BLQ9</accession>
<sequence>MNIDMAALHAIEVDRGISVNELLETIKSALLTAYRHTQGHQTDARIEIDRKTGVVRVIARETDEAGNLISEWDDTPEGFGRIAATTARQVMLQRFRDAENERTYGEFSTREGEIVAGVIQRDSRANARGLVVVRIGTETKASEGVIPAAEQVPGESYEHGNRLRCYVVGVTRGAREPLITLSRTHPNLVRKLFSLEVPEIADGSVEIVAVAREAGHRSKIAVRSNVAGLNAKGACIGPMGQRVRNVMSELSGEKIDIIDYDDDPARFVANALSPAKVVSVSVIDQTARAARVVVPDFQLSLAIGKEGQNARLAARLTGWRIDIRGDAPPPPPGQPEPGVSRGMAHDR</sequence>